<comment type="function">
    <text evidence="1">Involved in chemotaxis. Part of a chemotaxis signal transduction system that modulates chemotaxis in response to various stimuli. Catalyzes the demethylation of specific methylglutamate residues introduced into the chemoreceptors (methyl-accepting chemotaxis proteins or MCP) by CheR. Also mediates the irreversible deamidation of specific glutamine residues to glutamic acid.</text>
</comment>
<comment type="catalytic activity">
    <reaction evidence="1">
        <text>[protein]-L-glutamate 5-O-methyl ester + H2O = L-glutamyl-[protein] + methanol + H(+)</text>
        <dbReference type="Rhea" id="RHEA:23236"/>
        <dbReference type="Rhea" id="RHEA-COMP:10208"/>
        <dbReference type="Rhea" id="RHEA-COMP:10311"/>
        <dbReference type="ChEBI" id="CHEBI:15377"/>
        <dbReference type="ChEBI" id="CHEBI:15378"/>
        <dbReference type="ChEBI" id="CHEBI:17790"/>
        <dbReference type="ChEBI" id="CHEBI:29973"/>
        <dbReference type="ChEBI" id="CHEBI:82795"/>
        <dbReference type="EC" id="3.1.1.61"/>
    </reaction>
</comment>
<comment type="catalytic activity">
    <reaction evidence="1">
        <text>L-glutaminyl-[protein] + H2O = L-glutamyl-[protein] + NH4(+)</text>
        <dbReference type="Rhea" id="RHEA:16441"/>
        <dbReference type="Rhea" id="RHEA-COMP:10207"/>
        <dbReference type="Rhea" id="RHEA-COMP:10208"/>
        <dbReference type="ChEBI" id="CHEBI:15377"/>
        <dbReference type="ChEBI" id="CHEBI:28938"/>
        <dbReference type="ChEBI" id="CHEBI:29973"/>
        <dbReference type="ChEBI" id="CHEBI:30011"/>
        <dbReference type="EC" id="3.5.1.44"/>
    </reaction>
</comment>
<comment type="subcellular location">
    <subcellularLocation>
        <location evidence="1">Cytoplasm</location>
    </subcellularLocation>
</comment>
<comment type="domain">
    <text evidence="1">Contains a C-terminal catalytic domain, and an N-terminal region which modulates catalytic activity.</text>
</comment>
<comment type="PTM">
    <text evidence="1">Phosphorylated by CheA. Phosphorylation of the N-terminal regulatory domain activates the methylesterase activity.</text>
</comment>
<comment type="similarity">
    <text evidence="1">Belongs to the CheB family.</text>
</comment>
<feature type="chain" id="PRO_0000264259" description="Protein-glutamate methylesterase/protein-glutamine glutaminase 4">
    <location>
        <begin position="1"/>
        <end position="356"/>
    </location>
</feature>
<feature type="domain" description="Response regulatory" evidence="1">
    <location>
        <begin position="15"/>
        <end position="132"/>
    </location>
</feature>
<feature type="domain" description="CheB-type methylesterase" evidence="1">
    <location>
        <begin position="162"/>
        <end position="348"/>
    </location>
</feature>
<feature type="active site" evidence="1">
    <location>
        <position position="174"/>
    </location>
</feature>
<feature type="active site" evidence="1">
    <location>
        <position position="200"/>
    </location>
</feature>
<feature type="active site" evidence="1">
    <location>
        <position position="296"/>
    </location>
</feature>
<feature type="modified residue" description="4-aspartylphosphate" evidence="1">
    <location>
        <position position="66"/>
    </location>
</feature>
<keyword id="KW-0145">Chemotaxis</keyword>
<keyword id="KW-0963">Cytoplasm</keyword>
<keyword id="KW-0378">Hydrolase</keyword>
<keyword id="KW-0597">Phosphoprotein</keyword>
<keyword id="KW-1185">Reference proteome</keyword>
<organism>
    <name type="scientific">Anaeromyxobacter dehalogenans (strain 2CP-C)</name>
    <dbReference type="NCBI Taxonomy" id="290397"/>
    <lineage>
        <taxon>Bacteria</taxon>
        <taxon>Pseudomonadati</taxon>
        <taxon>Myxococcota</taxon>
        <taxon>Myxococcia</taxon>
        <taxon>Myxococcales</taxon>
        <taxon>Cystobacterineae</taxon>
        <taxon>Anaeromyxobacteraceae</taxon>
        <taxon>Anaeromyxobacter</taxon>
    </lineage>
</organism>
<dbReference type="EC" id="3.1.1.61" evidence="1"/>
<dbReference type="EC" id="3.5.1.44" evidence="1"/>
<dbReference type="EMBL" id="CP000251">
    <property type="protein sequence ID" value="ABC81147.1"/>
    <property type="molecule type" value="Genomic_DNA"/>
</dbReference>
<dbReference type="RefSeq" id="WP_011420430.1">
    <property type="nucleotide sequence ID" value="NC_007760.1"/>
</dbReference>
<dbReference type="SMR" id="Q2IQR9"/>
<dbReference type="STRING" id="290397.Adeh_1373"/>
<dbReference type="KEGG" id="ade:Adeh_1373"/>
<dbReference type="eggNOG" id="COG2201">
    <property type="taxonomic scope" value="Bacteria"/>
</dbReference>
<dbReference type="HOGENOM" id="CLU_000445_51_0_7"/>
<dbReference type="OrthoDB" id="9793421at2"/>
<dbReference type="Proteomes" id="UP000001935">
    <property type="component" value="Chromosome"/>
</dbReference>
<dbReference type="GO" id="GO:0005737">
    <property type="term" value="C:cytoplasm"/>
    <property type="evidence" value="ECO:0007669"/>
    <property type="project" value="UniProtKB-SubCell"/>
</dbReference>
<dbReference type="GO" id="GO:0000156">
    <property type="term" value="F:phosphorelay response regulator activity"/>
    <property type="evidence" value="ECO:0007669"/>
    <property type="project" value="InterPro"/>
</dbReference>
<dbReference type="GO" id="GO:0008984">
    <property type="term" value="F:protein-glutamate methylesterase activity"/>
    <property type="evidence" value="ECO:0007669"/>
    <property type="project" value="UniProtKB-UniRule"/>
</dbReference>
<dbReference type="GO" id="GO:0050568">
    <property type="term" value="F:protein-glutamine glutaminase activity"/>
    <property type="evidence" value="ECO:0007669"/>
    <property type="project" value="UniProtKB-UniRule"/>
</dbReference>
<dbReference type="GO" id="GO:0006935">
    <property type="term" value="P:chemotaxis"/>
    <property type="evidence" value="ECO:0007669"/>
    <property type="project" value="UniProtKB-UniRule"/>
</dbReference>
<dbReference type="CDD" id="cd16432">
    <property type="entry name" value="CheB_Rec"/>
    <property type="match status" value="1"/>
</dbReference>
<dbReference type="CDD" id="cd17541">
    <property type="entry name" value="REC_CheB-like"/>
    <property type="match status" value="1"/>
</dbReference>
<dbReference type="Gene3D" id="3.40.50.2300">
    <property type="match status" value="1"/>
</dbReference>
<dbReference type="Gene3D" id="3.40.50.180">
    <property type="entry name" value="Methylesterase CheB, C-terminal domain"/>
    <property type="match status" value="1"/>
</dbReference>
<dbReference type="HAMAP" id="MF_00099">
    <property type="entry name" value="CheB_chemtxs"/>
    <property type="match status" value="1"/>
</dbReference>
<dbReference type="InterPro" id="IPR008248">
    <property type="entry name" value="CheB-like"/>
</dbReference>
<dbReference type="InterPro" id="IPR035909">
    <property type="entry name" value="CheB_C"/>
</dbReference>
<dbReference type="InterPro" id="IPR011006">
    <property type="entry name" value="CheY-like_superfamily"/>
</dbReference>
<dbReference type="InterPro" id="IPR000673">
    <property type="entry name" value="Sig_transdc_resp-reg_Me-estase"/>
</dbReference>
<dbReference type="InterPro" id="IPR001789">
    <property type="entry name" value="Sig_transdc_resp-reg_receiver"/>
</dbReference>
<dbReference type="NCBIfam" id="NF001965">
    <property type="entry name" value="PRK00742.1"/>
    <property type="match status" value="1"/>
</dbReference>
<dbReference type="NCBIfam" id="NF009206">
    <property type="entry name" value="PRK12555.1"/>
    <property type="match status" value="1"/>
</dbReference>
<dbReference type="PANTHER" id="PTHR42872">
    <property type="entry name" value="PROTEIN-GLUTAMATE METHYLESTERASE/PROTEIN-GLUTAMINE GLUTAMINASE"/>
    <property type="match status" value="1"/>
</dbReference>
<dbReference type="PANTHER" id="PTHR42872:SF6">
    <property type="entry name" value="PROTEIN-GLUTAMATE METHYLESTERASE_PROTEIN-GLUTAMINE GLUTAMINASE"/>
    <property type="match status" value="1"/>
</dbReference>
<dbReference type="Pfam" id="PF01339">
    <property type="entry name" value="CheB_methylest"/>
    <property type="match status" value="1"/>
</dbReference>
<dbReference type="Pfam" id="PF00072">
    <property type="entry name" value="Response_reg"/>
    <property type="match status" value="1"/>
</dbReference>
<dbReference type="PIRSF" id="PIRSF000876">
    <property type="entry name" value="RR_chemtxs_CheB"/>
    <property type="match status" value="1"/>
</dbReference>
<dbReference type="SMART" id="SM00448">
    <property type="entry name" value="REC"/>
    <property type="match status" value="1"/>
</dbReference>
<dbReference type="SUPFAM" id="SSF52172">
    <property type="entry name" value="CheY-like"/>
    <property type="match status" value="1"/>
</dbReference>
<dbReference type="SUPFAM" id="SSF52738">
    <property type="entry name" value="Methylesterase CheB, C-terminal domain"/>
    <property type="match status" value="1"/>
</dbReference>
<dbReference type="PROSITE" id="PS50122">
    <property type="entry name" value="CHEB"/>
    <property type="match status" value="1"/>
</dbReference>
<dbReference type="PROSITE" id="PS50110">
    <property type="entry name" value="RESPONSE_REGULATORY"/>
    <property type="match status" value="1"/>
</dbReference>
<proteinExistence type="inferred from homology"/>
<name>CHEB4_ANADE</name>
<gene>
    <name evidence="1" type="primary">cheB4</name>
    <name type="ordered locus">Adeh_1373</name>
</gene>
<evidence type="ECO:0000255" key="1">
    <source>
        <dbReference type="HAMAP-Rule" id="MF_00099"/>
    </source>
</evidence>
<reference key="1">
    <citation type="submission" date="2006-01" db="EMBL/GenBank/DDBJ databases">
        <title>Complete sequence of Anaeromyxobacter dehalogenans 2CP-C.</title>
        <authorList>
            <person name="Copeland A."/>
            <person name="Lucas S."/>
            <person name="Lapidus A."/>
            <person name="Barry K."/>
            <person name="Detter J.C."/>
            <person name="Glavina T."/>
            <person name="Hammon N."/>
            <person name="Israni S."/>
            <person name="Pitluck S."/>
            <person name="Brettin T."/>
            <person name="Bruce D."/>
            <person name="Han C."/>
            <person name="Tapia R."/>
            <person name="Gilna P."/>
            <person name="Kiss H."/>
            <person name="Schmutz J."/>
            <person name="Larimer F."/>
            <person name="Land M."/>
            <person name="Kyrpides N."/>
            <person name="Anderson I."/>
            <person name="Sanford R.A."/>
            <person name="Ritalahti K.M."/>
            <person name="Thomas H.S."/>
            <person name="Kirby J.R."/>
            <person name="Zhulin I.B."/>
            <person name="Loeffler F.E."/>
            <person name="Richardson P."/>
        </authorList>
    </citation>
    <scope>NUCLEOTIDE SEQUENCE [LARGE SCALE GENOMIC DNA]</scope>
    <source>
        <strain>2CP-C</strain>
    </source>
</reference>
<protein>
    <recommendedName>
        <fullName evidence="1">Protein-glutamate methylesterase/protein-glutamine glutaminase 4</fullName>
        <ecNumber evidence="1">3.1.1.61</ecNumber>
        <ecNumber evidence="1">3.5.1.44</ecNumber>
    </recommendedName>
</protein>
<sequence>MDAGPAPAREPRRIRVLVVDDSAVVRNVFQQELSADPGIEVVGTAPDPFAARDLILERAPDVITLDVEMPRMDGITFLHKIMRYRPTPVIVVSSLTPAGGALALEALAAGACDVMCKPGAAYSVGEMTADLVEKVKEAAAAGVRAPAPLPPPDRAATPRALARTTLQVVAIGASTGGTVAIERILAALPPGAPGIVVTQHMPELFTRYFANRLRDRSGLDAREAQGGESVVPGTVLVAPGSRHMLLRRSGARYVVEIKDGPRVNRHRPSVDVMFRSVARAAGPNAIGVILTGMGGDGAQGLRAMRDAGARTVAQDEASCVVYGMPKVAVELGAVERSLPLDRIAPEILRLAGEAGG</sequence>
<accession>Q2IQR9</accession>